<proteinExistence type="inferred from homology"/>
<reference key="1">
    <citation type="journal article" date="2008" name="DNA Res.">
        <title>Complete genome sequence and comparative analysis of the wild-type commensal Escherichia coli strain SE11 isolated from a healthy adult.</title>
        <authorList>
            <person name="Oshima K."/>
            <person name="Toh H."/>
            <person name="Ogura Y."/>
            <person name="Sasamoto H."/>
            <person name="Morita H."/>
            <person name="Park S.-H."/>
            <person name="Ooka T."/>
            <person name="Iyoda S."/>
            <person name="Taylor T.D."/>
            <person name="Hayashi T."/>
            <person name="Itoh K."/>
            <person name="Hattori M."/>
        </authorList>
    </citation>
    <scope>NUCLEOTIDE SEQUENCE [LARGE SCALE GENOMIC DNA]</scope>
    <source>
        <strain>SE11</strain>
    </source>
</reference>
<keyword id="KW-0547">Nucleotide-binding</keyword>
<feature type="chain" id="PRO_1000130623" description="Nucleotide-binding protein YajQ">
    <location>
        <begin position="1"/>
        <end position="163"/>
    </location>
</feature>
<sequence>MPSFDIVSEVDLQEARNAVDNASREVESRFDFRNVEASFELNDASKTIKVLSESDFQVNQLLDILRAKLLKRGIEGSSLDVPENIVHSGKTWFVEAKLKQGIESATQKKIVKMIKDSKLKVQAQIQGDEIRVTGKSRDDLQAVMAMVRGGDLGQPFQFKNFRD</sequence>
<evidence type="ECO:0000255" key="1">
    <source>
        <dbReference type="HAMAP-Rule" id="MF_00632"/>
    </source>
</evidence>
<organism>
    <name type="scientific">Escherichia coli (strain SE11)</name>
    <dbReference type="NCBI Taxonomy" id="409438"/>
    <lineage>
        <taxon>Bacteria</taxon>
        <taxon>Pseudomonadati</taxon>
        <taxon>Pseudomonadota</taxon>
        <taxon>Gammaproteobacteria</taxon>
        <taxon>Enterobacterales</taxon>
        <taxon>Enterobacteriaceae</taxon>
        <taxon>Escherichia</taxon>
    </lineage>
</organism>
<dbReference type="EMBL" id="AP009240">
    <property type="protein sequence ID" value="BAG75972.1"/>
    <property type="molecule type" value="Genomic_DNA"/>
</dbReference>
<dbReference type="RefSeq" id="WP_001138904.1">
    <property type="nucleotide sequence ID" value="NC_011415.1"/>
</dbReference>
<dbReference type="SMR" id="B6HZM9"/>
<dbReference type="GeneID" id="93777034"/>
<dbReference type="KEGG" id="ecy:ECSE_0448"/>
<dbReference type="HOGENOM" id="CLU_099839_1_0_6"/>
<dbReference type="Proteomes" id="UP000008199">
    <property type="component" value="Chromosome"/>
</dbReference>
<dbReference type="GO" id="GO:0005829">
    <property type="term" value="C:cytosol"/>
    <property type="evidence" value="ECO:0007669"/>
    <property type="project" value="TreeGrafter"/>
</dbReference>
<dbReference type="GO" id="GO:0000166">
    <property type="term" value="F:nucleotide binding"/>
    <property type="evidence" value="ECO:0007669"/>
    <property type="project" value="TreeGrafter"/>
</dbReference>
<dbReference type="CDD" id="cd11740">
    <property type="entry name" value="YajQ_like"/>
    <property type="match status" value="1"/>
</dbReference>
<dbReference type="FunFam" id="3.30.70.860:FF:000001">
    <property type="entry name" value="UPF0234 protein YajQ"/>
    <property type="match status" value="1"/>
</dbReference>
<dbReference type="FunFam" id="3.30.70.990:FF:000001">
    <property type="entry name" value="UPF0234 protein YajQ"/>
    <property type="match status" value="1"/>
</dbReference>
<dbReference type="Gene3D" id="3.30.70.860">
    <property type="match status" value="1"/>
</dbReference>
<dbReference type="Gene3D" id="3.30.70.990">
    <property type="entry name" value="YajQ-like, domain 2"/>
    <property type="match status" value="1"/>
</dbReference>
<dbReference type="HAMAP" id="MF_00632">
    <property type="entry name" value="YajQ"/>
    <property type="match status" value="1"/>
</dbReference>
<dbReference type="InterPro" id="IPR007551">
    <property type="entry name" value="DUF520"/>
</dbReference>
<dbReference type="InterPro" id="IPR035571">
    <property type="entry name" value="UPF0234-like_C"/>
</dbReference>
<dbReference type="InterPro" id="IPR035570">
    <property type="entry name" value="UPF0234_N"/>
</dbReference>
<dbReference type="InterPro" id="IPR036183">
    <property type="entry name" value="YajQ-like_sf"/>
</dbReference>
<dbReference type="NCBIfam" id="NF003819">
    <property type="entry name" value="PRK05412.1"/>
    <property type="match status" value="1"/>
</dbReference>
<dbReference type="PANTHER" id="PTHR30476">
    <property type="entry name" value="UPF0234 PROTEIN YAJQ"/>
    <property type="match status" value="1"/>
</dbReference>
<dbReference type="PANTHER" id="PTHR30476:SF0">
    <property type="entry name" value="UPF0234 PROTEIN YAJQ"/>
    <property type="match status" value="1"/>
</dbReference>
<dbReference type="Pfam" id="PF04461">
    <property type="entry name" value="DUF520"/>
    <property type="match status" value="1"/>
</dbReference>
<dbReference type="SUPFAM" id="SSF89963">
    <property type="entry name" value="YajQ-like"/>
    <property type="match status" value="2"/>
</dbReference>
<name>YAJQ_ECOSE</name>
<comment type="function">
    <text evidence="1">Nucleotide-binding protein.</text>
</comment>
<comment type="similarity">
    <text evidence="1">Belongs to the YajQ family.</text>
</comment>
<protein>
    <recommendedName>
        <fullName evidence="1">Nucleotide-binding protein YajQ</fullName>
    </recommendedName>
</protein>
<accession>B6HZM9</accession>
<gene>
    <name evidence="1" type="primary">yajQ</name>
    <name type="ordered locus">ECSE_0448</name>
</gene>